<sequence>MDLWQLLLTLALAGSSDAFSGSEPTAAILSRASWSLQSVNPGLKTNSSKEPKFTKCRSPERETFSCHWTDAVHHGSKSLGPIQLFYTRRNIQEWTQEWKECPDYVSAGENSCYFNSSFTSVWIPYCIKLTSNGDTVDGKCFSVDEIVQPDPPIALNWTLLNVSLTGIHADIQVRWEAPPNADIQKGWMVLEYELQYKEVNETKWKMMDPILSTSVPVYSLKVDKEYEVRVRSKRRNSGNYGEFSEVLYVTLPQMNQFTCEEDFYFPWLLIIIFGIFGLTVMLFVFLFSKQQRIKMLILPPVPVPKIKGIDPDLLKEGKLEEVNTILAIHDSYKPEFHSDDSWVEFIELDIDEPDEKNEGSDTDRLLSSDHQKSHSNLGVKDGDSGRTSCYEPDILETDFNANNIHEGTSEVAQPQRLKGEADLLCLDQKNQNKSPYHDACPAAQQSSVIQAEKNKPQPLPTDGAESTHQAAHIQLSNPSSLANIDFYAQVSDITPAGSVVLSPGQKNKAGMSQCDMHLEMVSLCQEDFIMDNAYFCEADAKKCIPVAPHIKVESHIEPSFNQEDIYITTESLTTTAGRPGTTEHIPGSEMPVPDYTSIHIVQSPQGLILNATALPLPGKEFLSSCGYVSTDQLNKIMP</sequence>
<name>GHR_PAPAN</name>
<evidence type="ECO:0000250" key="1">
    <source>
        <dbReference type="UniProtKB" id="P10912"/>
    </source>
</evidence>
<evidence type="ECO:0000250" key="2">
    <source>
        <dbReference type="UniProtKB" id="P16310"/>
    </source>
</evidence>
<evidence type="ECO:0000250" key="3">
    <source>
        <dbReference type="UniProtKB" id="P19941"/>
    </source>
</evidence>
<evidence type="ECO:0000255" key="4"/>
<evidence type="ECO:0000255" key="5">
    <source>
        <dbReference type="PROSITE-ProRule" id="PRU00316"/>
    </source>
</evidence>
<evidence type="ECO:0000256" key="6">
    <source>
        <dbReference type="SAM" id="MobiDB-lite"/>
    </source>
</evidence>
<evidence type="ECO:0000303" key="7">
    <source>
    </source>
</evidence>
<evidence type="ECO:0000305" key="8"/>
<feature type="signal peptide" evidence="4">
    <location>
        <begin position="1"/>
        <end position="18"/>
    </location>
</feature>
<feature type="chain" id="PRO_0000010963" description="Growth hormone receptor">
    <location>
        <begin position="19"/>
        <end position="638"/>
    </location>
</feature>
<feature type="chain" id="PRO_0000010964" description="Growth hormone-binding protein" evidence="3">
    <location>
        <begin position="19"/>
        <end position="256"/>
    </location>
</feature>
<feature type="topological domain" description="Extracellular" evidence="4">
    <location>
        <begin position="19"/>
        <end position="264"/>
    </location>
</feature>
<feature type="transmembrane region" description="Helical" evidence="4">
    <location>
        <begin position="265"/>
        <end position="288"/>
    </location>
</feature>
<feature type="topological domain" description="Cytoplasmic" evidence="4">
    <location>
        <begin position="289"/>
        <end position="638"/>
    </location>
</feature>
<feature type="domain" description="Fibronectin type-III" evidence="5">
    <location>
        <begin position="151"/>
        <end position="254"/>
    </location>
</feature>
<feature type="region of interest" description="Required for JAK2 binding" evidence="2">
    <location>
        <begin position="294"/>
        <end position="379"/>
    </location>
</feature>
<feature type="region of interest" description="Disordered" evidence="6">
    <location>
        <begin position="353"/>
        <end position="388"/>
    </location>
</feature>
<feature type="short sequence motif" description="WSXWS motif" evidence="1">
    <location>
        <begin position="240"/>
        <end position="244"/>
    </location>
</feature>
<feature type="short sequence motif" description="Box 1 motif" evidence="2">
    <location>
        <begin position="297"/>
        <end position="305"/>
    </location>
</feature>
<feature type="short sequence motif" description="UbE motif" evidence="3">
    <location>
        <begin position="340"/>
        <end position="349"/>
    </location>
</feature>
<feature type="compositionally biased region" description="Basic and acidic residues" evidence="6">
    <location>
        <begin position="356"/>
        <end position="372"/>
    </location>
</feature>
<feature type="modified residue" description="Phosphoserine" evidence="1">
    <location>
        <position position="341"/>
    </location>
</feature>
<feature type="modified residue" description="Phosphotyrosine" evidence="1">
    <location>
        <position position="487"/>
    </location>
</feature>
<feature type="modified residue" description="Phosphotyrosine" evidence="1">
    <location>
        <position position="595"/>
    </location>
</feature>
<feature type="glycosylation site" description="N-linked (GlcNAc...) asparagine" evidence="4">
    <location>
        <position position="46"/>
    </location>
</feature>
<feature type="glycosylation site" description="N-linked (GlcNAc...) asparagine" evidence="4">
    <location>
        <position position="115"/>
    </location>
</feature>
<feature type="glycosylation site" description="N-linked (GlcNAc...) asparagine" evidence="4">
    <location>
        <position position="156"/>
    </location>
</feature>
<feature type="glycosylation site" description="N-linked (GlcNAc...) asparagine" evidence="4">
    <location>
        <position position="161"/>
    </location>
</feature>
<feature type="glycosylation site" description="N-linked (GlcNAc...) asparagine" evidence="4">
    <location>
        <position position="200"/>
    </location>
</feature>
<feature type="disulfide bond" evidence="1">
    <location>
        <begin position="56"/>
        <end position="66"/>
    </location>
</feature>
<feature type="disulfide bond" evidence="1">
    <location>
        <begin position="101"/>
        <end position="112"/>
    </location>
</feature>
<feature type="disulfide bond" evidence="1">
    <location>
        <begin position="126"/>
        <end position="140"/>
    </location>
</feature>
<accession>Q9XSZ1</accession>
<comment type="function">
    <text evidence="1">Receptor for pituitary gland growth hormone (GH1) involved in regulating postnatal body growth. On ligand binding, couples to the JAK2/STAT5 pathway.</text>
</comment>
<comment type="function">
    <molecule>Growth hormone-binding protein</molecule>
    <text evidence="1">The soluble form (GHBP) acts as a reservoir of growth hormone in plasma and may be a modulator/inhibitor of GH signaling.</text>
</comment>
<comment type="subunit">
    <text evidence="1">On growth hormone (GH) binding, forms homodimers and binds JAK2 via a box 1-containing domain.</text>
</comment>
<comment type="subcellular location">
    <subcellularLocation>
        <location evidence="1">Cell membrane</location>
        <topology evidence="4">Single-pass type I membrane protein</topology>
    </subcellularLocation>
    <text evidence="3">On growth hormone binding, GHR is ubiquitinated, internalized, down-regulated and transported into a degradative or non-degradative pathway.</text>
</comment>
<comment type="subcellular location">
    <molecule>Growth hormone-binding protein</molecule>
    <subcellularLocation>
        <location evidence="1">Secreted</location>
    </subcellularLocation>
    <text evidence="1">Complexed to a substantial fraction of circulating GH.</text>
</comment>
<comment type="domain">
    <text evidence="1">The WSXWS motif appears to be necessary for proper protein folding and thereby efficient intracellular transport and cell-surface receptor binding.</text>
</comment>
<comment type="domain">
    <text evidence="2">The box 1 motif is required for JAK interaction and/or activation.</text>
</comment>
<comment type="domain">
    <text evidence="1">The extracellular domain is the ligand-binding domain representing the growth hormone-binding protein (GHBP).</text>
</comment>
<comment type="domain">
    <text evidence="3">The ubiquitination-dependent endocytosis motif (UbE) is required for recruitment of the ubiquitin conjugation system on to the receptor and for its internalization.</text>
</comment>
<comment type="PTM">
    <text evidence="1 3">The soluble form (GHBP) is produced by phorbol ester-promoted proteolytic cleavage at the cell surface (shedding) by ADAM17/TACE (By similarity). Shedding is inhibited by growth hormone (GH) binding to the receptor probably due to a conformational change in GHR rendering the receptor inaccessible to ADAM17 (By similarity).</text>
</comment>
<comment type="PTM">
    <text evidence="1">On GH binding, phosphorylated on tyrosine residues in the cytoplasmic domain by JAK2.</text>
</comment>
<comment type="PTM">
    <text evidence="1 3">Ubiquitinated by the ECS(SOCS2) complex following ligand-binding and phosphorylation by JAK2, leading to its degradation by the proteasome. Regulation by the ECS(SOCS2) complex acts as a negative feedback loop of growth hormone receptor signaling (By similarity). Ubiquitination is not sufficient for GHR internalization (By similarity).</text>
</comment>
<comment type="similarity">
    <text evidence="8">Belongs to the type I cytokine receptor family. Type 1 subfamily.</text>
</comment>
<organism>
    <name type="scientific">Papio anubis</name>
    <name type="common">Olive baboon</name>
    <dbReference type="NCBI Taxonomy" id="9555"/>
    <lineage>
        <taxon>Eukaryota</taxon>
        <taxon>Metazoa</taxon>
        <taxon>Chordata</taxon>
        <taxon>Craniata</taxon>
        <taxon>Vertebrata</taxon>
        <taxon>Euteleostomi</taxon>
        <taxon>Mammalia</taxon>
        <taxon>Eutheria</taxon>
        <taxon>Euarchontoglires</taxon>
        <taxon>Primates</taxon>
        <taxon>Haplorrhini</taxon>
        <taxon>Catarrhini</taxon>
        <taxon>Cercopithecidae</taxon>
        <taxon>Cercopithecinae</taxon>
        <taxon>Papio</taxon>
    </lineage>
</organism>
<proteinExistence type="evidence at transcript level"/>
<dbReference type="EMBL" id="AF150751">
    <property type="protein sequence ID" value="AAD39536.1"/>
    <property type="molecule type" value="mRNA"/>
</dbReference>
<dbReference type="RefSeq" id="NP_001106086.1">
    <property type="nucleotide sequence ID" value="NM_001112616.1"/>
</dbReference>
<dbReference type="SMR" id="Q9XSZ1"/>
<dbReference type="STRING" id="9555.ENSPANP00000000849"/>
<dbReference type="GlyCosmos" id="Q9XSZ1">
    <property type="glycosylation" value="5 sites, No reported glycans"/>
</dbReference>
<dbReference type="GeneID" id="100126695"/>
<dbReference type="KEGG" id="panu:100126695"/>
<dbReference type="CTD" id="2690"/>
<dbReference type="eggNOG" id="KOG3555">
    <property type="taxonomic scope" value="Eukaryota"/>
</dbReference>
<dbReference type="Proteomes" id="UP000028761">
    <property type="component" value="Unplaced"/>
</dbReference>
<dbReference type="GO" id="GO:0009897">
    <property type="term" value="C:external side of plasma membrane"/>
    <property type="evidence" value="ECO:0007669"/>
    <property type="project" value="TreeGrafter"/>
</dbReference>
<dbReference type="GO" id="GO:0005576">
    <property type="term" value="C:extracellular region"/>
    <property type="evidence" value="ECO:0007669"/>
    <property type="project" value="UniProtKB-SubCell"/>
</dbReference>
<dbReference type="GO" id="GO:0004896">
    <property type="term" value="F:cytokine receptor activity"/>
    <property type="evidence" value="ECO:0007669"/>
    <property type="project" value="InterPro"/>
</dbReference>
<dbReference type="GO" id="GO:0006897">
    <property type="term" value="P:endocytosis"/>
    <property type="evidence" value="ECO:0007669"/>
    <property type="project" value="UniProtKB-KW"/>
</dbReference>
<dbReference type="CDD" id="cd00063">
    <property type="entry name" value="FN3"/>
    <property type="match status" value="1"/>
</dbReference>
<dbReference type="FunFam" id="2.60.40.10:FF:000269">
    <property type="entry name" value="Growth hormone receptor"/>
    <property type="match status" value="1"/>
</dbReference>
<dbReference type="FunFam" id="2.60.40.10:FF:000318">
    <property type="entry name" value="Growth hormone receptor"/>
    <property type="match status" value="1"/>
</dbReference>
<dbReference type="Gene3D" id="2.60.40.10">
    <property type="entry name" value="Immunoglobulins"/>
    <property type="match status" value="2"/>
</dbReference>
<dbReference type="InterPro" id="IPR003961">
    <property type="entry name" value="FN3_dom"/>
</dbReference>
<dbReference type="InterPro" id="IPR036116">
    <property type="entry name" value="FN3_sf"/>
</dbReference>
<dbReference type="InterPro" id="IPR025871">
    <property type="entry name" value="GHBP"/>
</dbReference>
<dbReference type="InterPro" id="IPR015152">
    <property type="entry name" value="Growth/epo_recpt_lig-bind"/>
</dbReference>
<dbReference type="InterPro" id="IPR013783">
    <property type="entry name" value="Ig-like_fold"/>
</dbReference>
<dbReference type="InterPro" id="IPR003528">
    <property type="entry name" value="Long_hematopoietin_rcpt_CS"/>
</dbReference>
<dbReference type="PANTHER" id="PTHR23037">
    <property type="entry name" value="CYTOKINE RECEPTOR"/>
    <property type="match status" value="1"/>
</dbReference>
<dbReference type="PANTHER" id="PTHR23037:SF46">
    <property type="entry name" value="INTERLEUKIN 5 RECEPTOR SUBUNIT ALPHA"/>
    <property type="match status" value="1"/>
</dbReference>
<dbReference type="Pfam" id="PF09067">
    <property type="entry name" value="EpoR_lig-bind"/>
    <property type="match status" value="1"/>
</dbReference>
<dbReference type="Pfam" id="PF00041">
    <property type="entry name" value="fn3"/>
    <property type="match status" value="1"/>
</dbReference>
<dbReference type="Pfam" id="PF12772">
    <property type="entry name" value="GHBP"/>
    <property type="match status" value="1"/>
</dbReference>
<dbReference type="SUPFAM" id="SSF49265">
    <property type="entry name" value="Fibronectin type III"/>
    <property type="match status" value="2"/>
</dbReference>
<dbReference type="PROSITE" id="PS50853">
    <property type="entry name" value="FN3"/>
    <property type="match status" value="1"/>
</dbReference>
<dbReference type="PROSITE" id="PS01352">
    <property type="entry name" value="HEMATOPO_REC_L_F1"/>
    <property type="match status" value="1"/>
</dbReference>
<keyword id="KW-1003">Cell membrane</keyword>
<keyword id="KW-1015">Disulfide bond</keyword>
<keyword id="KW-0254">Endocytosis</keyword>
<keyword id="KW-0325">Glycoprotein</keyword>
<keyword id="KW-0472">Membrane</keyword>
<keyword id="KW-0597">Phosphoprotein</keyword>
<keyword id="KW-0675">Receptor</keyword>
<keyword id="KW-1185">Reference proteome</keyword>
<keyword id="KW-0964">Secreted</keyword>
<keyword id="KW-0732">Signal</keyword>
<keyword id="KW-0812">Transmembrane</keyword>
<keyword id="KW-1133">Transmembrane helix</keyword>
<keyword id="KW-0832">Ubl conjugation</keyword>
<protein>
    <recommendedName>
        <fullName evidence="7">Growth hormone receptor</fullName>
        <shortName>GH receptor</shortName>
    </recommendedName>
    <alternativeName>
        <fullName>Somatotropin receptor</fullName>
    </alternativeName>
    <component>
        <recommendedName>
            <fullName>Growth hormone-binding protein</fullName>
            <shortName>GH-binding protein</shortName>
            <shortName>GHBP</shortName>
        </recommendedName>
        <alternativeName>
            <fullName>Serum-binding protein</fullName>
        </alternativeName>
    </component>
</protein>
<reference key="1">
    <citation type="journal article" date="1999" name="J. Mol. Endocrinol.">
        <title>The baboon: a model for the study of primate growth hormone receptor gene expression during development.</title>
        <authorList>
            <person name="Zogopoulos G."/>
            <person name="Nathanielsz P."/>
            <person name="Hendy G.N."/>
            <person name="Goodyer C.G."/>
        </authorList>
    </citation>
    <scope>NUCLEOTIDE SEQUENCE [MRNA]</scope>
    <source>
        <tissue>Liver</tissue>
    </source>
</reference>
<gene>
    <name type="primary">GHR</name>
</gene>